<comment type="similarity">
    <text evidence="1">Belongs to the peptidase M20 family.</text>
</comment>
<accession>Q7A5P6</accession>
<protein>
    <recommendedName>
        <fullName>Uncharacterized hydrolase SA1230</fullName>
        <ecNumber>3.-.-.-</ecNumber>
    </recommendedName>
</protein>
<sequence length="383" mass="43144">MNELEFVTKHRRHLHQHPELSLHEFETTAYIKAFLDSLNIKYDCPLETGVIAYLEGNGSHTIAYRADIDALPILEENDVPYRSQSDHVMHACGHDGHTTALMLFVQRCKDMQDAGQLPQNVVFIFQPAEETGGGANRLIKAGAFDKYPIEAVFGIHVNPFADEGIAVIRDEEITASATEYRFFLTGLSSHVADKEQAHSCGEALQHVLTQISQIQQFHLNGLKRNIVHIGHFKAGEAINTVPSNGYLEGTIRTYDIDDLTIVKNQMHKIAESVKLLFNVECEVKFAEGYPPTINSPKLRTQIEDALIKADLNVYDKPTPFLFGEDFSFYGQQLAPAYFVFIGTRNEDKGFVTGLHTSHLNFDEKALINVVNFYENLLNNYKEV</sequence>
<organism>
    <name type="scientific">Staphylococcus aureus (strain N315)</name>
    <dbReference type="NCBI Taxonomy" id="158879"/>
    <lineage>
        <taxon>Bacteria</taxon>
        <taxon>Bacillati</taxon>
        <taxon>Bacillota</taxon>
        <taxon>Bacilli</taxon>
        <taxon>Bacillales</taxon>
        <taxon>Staphylococcaceae</taxon>
        <taxon>Staphylococcus</taxon>
    </lineage>
</organism>
<gene>
    <name type="ordered locus">SA1230</name>
</gene>
<keyword id="KW-0378">Hydrolase</keyword>
<dbReference type="EC" id="3.-.-.-"/>
<dbReference type="EMBL" id="BA000018">
    <property type="protein sequence ID" value="BAB42490.1"/>
    <property type="molecule type" value="Genomic_DNA"/>
</dbReference>
<dbReference type="PIR" id="F89916">
    <property type="entry name" value="F89916"/>
</dbReference>
<dbReference type="RefSeq" id="WP_001003789.1">
    <property type="nucleotide sequence ID" value="NC_002745.2"/>
</dbReference>
<dbReference type="SMR" id="Q7A5P6"/>
<dbReference type="EnsemblBacteria" id="BAB42490">
    <property type="protein sequence ID" value="BAB42490"/>
    <property type="gene ID" value="BAB42490"/>
</dbReference>
<dbReference type="KEGG" id="sau:SA1230"/>
<dbReference type="HOGENOM" id="CLU_023257_1_0_9"/>
<dbReference type="GO" id="GO:0016787">
    <property type="term" value="F:hydrolase activity"/>
    <property type="evidence" value="ECO:0007669"/>
    <property type="project" value="UniProtKB-KW"/>
</dbReference>
<dbReference type="FunFam" id="3.30.70.360:FF:000022">
    <property type="entry name" value="Hippurate hydrolase"/>
    <property type="match status" value="1"/>
</dbReference>
<dbReference type="Gene3D" id="3.30.70.360">
    <property type="match status" value="1"/>
</dbReference>
<dbReference type="Gene3D" id="3.40.630.10">
    <property type="entry name" value="Zn peptidases"/>
    <property type="match status" value="1"/>
</dbReference>
<dbReference type="InterPro" id="IPR017439">
    <property type="entry name" value="Amidohydrolase"/>
</dbReference>
<dbReference type="InterPro" id="IPR036264">
    <property type="entry name" value="Bact_exopeptidase_dim_dom"/>
</dbReference>
<dbReference type="InterPro" id="IPR002933">
    <property type="entry name" value="Peptidase_M20"/>
</dbReference>
<dbReference type="InterPro" id="IPR011650">
    <property type="entry name" value="Peptidase_M20_dimer"/>
</dbReference>
<dbReference type="NCBIfam" id="TIGR01891">
    <property type="entry name" value="amidohydrolases"/>
    <property type="match status" value="1"/>
</dbReference>
<dbReference type="PANTHER" id="PTHR11014:SF63">
    <property type="entry name" value="METALLOPEPTIDASE, PUTATIVE (AFU_ORTHOLOGUE AFUA_6G09600)-RELATED"/>
    <property type="match status" value="1"/>
</dbReference>
<dbReference type="PANTHER" id="PTHR11014">
    <property type="entry name" value="PEPTIDASE M20 FAMILY MEMBER"/>
    <property type="match status" value="1"/>
</dbReference>
<dbReference type="Pfam" id="PF07687">
    <property type="entry name" value="M20_dimer"/>
    <property type="match status" value="1"/>
</dbReference>
<dbReference type="Pfam" id="PF01546">
    <property type="entry name" value="Peptidase_M20"/>
    <property type="match status" value="1"/>
</dbReference>
<dbReference type="PIRSF" id="PIRSF005962">
    <property type="entry name" value="Pept_M20D_amidohydro"/>
    <property type="match status" value="1"/>
</dbReference>
<dbReference type="SUPFAM" id="SSF55031">
    <property type="entry name" value="Bacterial exopeptidase dimerisation domain"/>
    <property type="match status" value="1"/>
</dbReference>
<dbReference type="SUPFAM" id="SSF53187">
    <property type="entry name" value="Zn-dependent exopeptidases"/>
    <property type="match status" value="1"/>
</dbReference>
<proteinExistence type="inferred from homology"/>
<reference key="1">
    <citation type="journal article" date="2001" name="Lancet">
        <title>Whole genome sequencing of meticillin-resistant Staphylococcus aureus.</title>
        <authorList>
            <person name="Kuroda M."/>
            <person name="Ohta T."/>
            <person name="Uchiyama I."/>
            <person name="Baba T."/>
            <person name="Yuzawa H."/>
            <person name="Kobayashi I."/>
            <person name="Cui L."/>
            <person name="Oguchi A."/>
            <person name="Aoki K."/>
            <person name="Nagai Y."/>
            <person name="Lian J.-Q."/>
            <person name="Ito T."/>
            <person name="Kanamori M."/>
            <person name="Matsumaru H."/>
            <person name="Maruyama A."/>
            <person name="Murakami H."/>
            <person name="Hosoyama A."/>
            <person name="Mizutani-Ui Y."/>
            <person name="Takahashi N.K."/>
            <person name="Sawano T."/>
            <person name="Inoue R."/>
            <person name="Kaito C."/>
            <person name="Sekimizu K."/>
            <person name="Hirakawa H."/>
            <person name="Kuhara S."/>
            <person name="Goto S."/>
            <person name="Yabuzaki J."/>
            <person name="Kanehisa M."/>
            <person name="Yamashita A."/>
            <person name="Oshima K."/>
            <person name="Furuya K."/>
            <person name="Yoshino C."/>
            <person name="Shiba T."/>
            <person name="Hattori M."/>
            <person name="Ogasawara N."/>
            <person name="Hayashi H."/>
            <person name="Hiramatsu K."/>
        </authorList>
    </citation>
    <scope>NUCLEOTIDE SEQUENCE [LARGE SCALE GENOMIC DNA]</scope>
    <source>
        <strain>N315</strain>
    </source>
</reference>
<evidence type="ECO:0000305" key="1"/>
<name>Y1230_STAAN</name>
<feature type="chain" id="PRO_0000298624" description="Uncharacterized hydrolase SA1230">
    <location>
        <begin position="1"/>
        <end position="383"/>
    </location>
</feature>